<feature type="chain" id="PRO_0000144339" description="ATP synthase subunit alpha">
    <location>
        <begin position="1"/>
        <end position="549"/>
    </location>
</feature>
<feature type="binding site" evidence="1">
    <location>
        <begin position="172"/>
        <end position="179"/>
    </location>
    <ligand>
        <name>ATP</name>
        <dbReference type="ChEBI" id="CHEBI:30616"/>
    </ligand>
</feature>
<feature type="site" description="Required for activity">
    <location>
        <position position="373"/>
    </location>
</feature>
<feature type="cross-link" description="Isoglutamyl lysine isopeptide (Lys-Gln) (interchain with Q-Cter in protein Pup)" evidence="2">
    <location>
        <position position="499"/>
    </location>
</feature>
<feature type="helix" evidence="3">
    <location>
        <begin position="8"/>
        <end position="20"/>
    </location>
</feature>
<feature type="strand" evidence="3">
    <location>
        <begin position="29"/>
        <end position="38"/>
    </location>
</feature>
<feature type="strand" evidence="3">
    <location>
        <begin position="41"/>
        <end position="46"/>
    </location>
</feature>
<feature type="strand" evidence="3">
    <location>
        <begin position="54"/>
        <end position="58"/>
    </location>
</feature>
<feature type="turn" evidence="3">
    <location>
        <begin position="59"/>
        <end position="61"/>
    </location>
</feature>
<feature type="strand" evidence="3">
    <location>
        <begin position="62"/>
        <end position="69"/>
    </location>
</feature>
<feature type="strand" evidence="3">
    <location>
        <begin position="74"/>
        <end position="78"/>
    </location>
</feature>
<feature type="helix" evidence="3">
    <location>
        <begin position="82"/>
        <end position="84"/>
    </location>
</feature>
<feature type="strand" evidence="3">
    <location>
        <begin position="90"/>
        <end position="97"/>
    </location>
</feature>
<feature type="strand" evidence="3">
    <location>
        <begin position="99"/>
        <end position="103"/>
    </location>
</feature>
<feature type="helix" evidence="3">
    <location>
        <begin position="104"/>
        <end position="106"/>
    </location>
</feature>
<feature type="strand" evidence="3">
    <location>
        <begin position="119"/>
        <end position="121"/>
    </location>
</feature>
<feature type="strand" evidence="3">
    <location>
        <begin position="127"/>
        <end position="131"/>
    </location>
</feature>
<feature type="strand" evidence="3">
    <location>
        <begin position="139"/>
        <end position="142"/>
    </location>
</feature>
<feature type="helix" evidence="3">
    <location>
        <begin position="154"/>
        <end position="159"/>
    </location>
</feature>
<feature type="strand" evidence="3">
    <location>
        <begin position="169"/>
        <end position="177"/>
    </location>
</feature>
<feature type="helix" evidence="3">
    <location>
        <begin position="178"/>
        <end position="187"/>
    </location>
</feature>
<feature type="helix" evidence="3">
    <location>
        <begin position="190"/>
        <end position="195"/>
    </location>
</feature>
<feature type="turn" evidence="3">
    <location>
        <begin position="198"/>
        <end position="200"/>
    </location>
</feature>
<feature type="strand" evidence="3">
    <location>
        <begin position="202"/>
        <end position="211"/>
    </location>
</feature>
<feature type="helix" evidence="3">
    <location>
        <begin position="213"/>
        <end position="225"/>
    </location>
</feature>
<feature type="helix" evidence="4">
    <location>
        <begin position="228"/>
        <end position="230"/>
    </location>
</feature>
<feature type="strand" evidence="3">
    <location>
        <begin position="231"/>
        <end position="238"/>
    </location>
</feature>
<feature type="helix" evidence="3">
    <location>
        <begin position="243"/>
        <end position="255"/>
    </location>
</feature>
<feature type="helix" evidence="3">
    <location>
        <begin position="258"/>
        <end position="261"/>
    </location>
</feature>
<feature type="turn" evidence="3">
    <location>
        <begin position="262"/>
        <end position="264"/>
    </location>
</feature>
<feature type="strand" evidence="3">
    <location>
        <begin position="266"/>
        <end position="272"/>
    </location>
</feature>
<feature type="helix" evidence="3">
    <location>
        <begin position="274"/>
        <end position="287"/>
    </location>
</feature>
<feature type="helix" evidence="3">
    <location>
        <begin position="294"/>
        <end position="296"/>
    </location>
</feature>
<feature type="helix" evidence="3">
    <location>
        <begin position="301"/>
        <end position="309"/>
    </location>
</feature>
<feature type="turn" evidence="3">
    <location>
        <begin position="317"/>
        <end position="320"/>
    </location>
</feature>
<feature type="strand" evidence="3">
    <location>
        <begin position="323"/>
        <end position="331"/>
    </location>
</feature>
<feature type="helix" evidence="3">
    <location>
        <begin position="340"/>
        <end position="348"/>
    </location>
</feature>
<feature type="strand" evidence="3">
    <location>
        <begin position="349"/>
        <end position="355"/>
    </location>
</feature>
<feature type="helix" evidence="3">
    <location>
        <begin position="357"/>
        <end position="361"/>
    </location>
</feature>
<feature type="turn" evidence="3">
    <location>
        <begin position="370"/>
        <end position="372"/>
    </location>
</feature>
<feature type="strand" evidence="3">
    <location>
        <begin position="374"/>
        <end position="377"/>
    </location>
</feature>
<feature type="helix" evidence="3">
    <location>
        <begin position="378"/>
        <end position="381"/>
    </location>
</feature>
<feature type="helix" evidence="3">
    <location>
        <begin position="384"/>
        <end position="389"/>
    </location>
</feature>
<feature type="turn" evidence="3">
    <location>
        <begin position="391"/>
        <end position="393"/>
    </location>
</feature>
<feature type="helix" evidence="3">
    <location>
        <begin position="394"/>
        <end position="403"/>
    </location>
</feature>
<feature type="helix" evidence="3">
    <location>
        <begin position="404"/>
        <end position="412"/>
    </location>
</feature>
<feature type="helix" evidence="3">
    <location>
        <begin position="415"/>
        <end position="430"/>
    </location>
</feature>
<feature type="helix" evidence="3">
    <location>
        <begin position="441"/>
        <end position="453"/>
    </location>
</feature>
<feature type="turn" evidence="3">
    <location>
        <begin position="454"/>
        <end position="458"/>
    </location>
</feature>
<feature type="helix" evidence="3">
    <location>
        <begin position="461"/>
        <end position="463"/>
    </location>
</feature>
<feature type="helix" evidence="3">
    <location>
        <begin position="464"/>
        <end position="477"/>
    </location>
</feature>
<feature type="helix" evidence="3">
    <location>
        <begin position="480"/>
        <end position="489"/>
    </location>
</feature>
<feature type="helix" evidence="3">
    <location>
        <begin position="494"/>
        <end position="510"/>
    </location>
</feature>
<feature type="strand" evidence="4">
    <location>
        <begin position="514"/>
        <end position="516"/>
    </location>
</feature>
<feature type="helix" evidence="3">
    <location>
        <begin position="530"/>
        <end position="532"/>
    </location>
</feature>
<feature type="strand" evidence="3">
    <location>
        <begin position="533"/>
        <end position="540"/>
    </location>
</feature>
<dbReference type="EC" id="7.1.2.2" evidence="1"/>
<dbReference type="EMBL" id="AL123456">
    <property type="protein sequence ID" value="CCP44065.1"/>
    <property type="molecule type" value="Genomic_DNA"/>
</dbReference>
<dbReference type="PIR" id="H70774">
    <property type="entry name" value="H70774"/>
</dbReference>
<dbReference type="RefSeq" id="NP_215824.1">
    <property type="nucleotide sequence ID" value="NC_000962.3"/>
</dbReference>
<dbReference type="RefSeq" id="WP_003406699.1">
    <property type="nucleotide sequence ID" value="NZ_NVQJ01000030.1"/>
</dbReference>
<dbReference type="PDB" id="8J0S">
    <property type="method" value="EM"/>
    <property type="resolution" value="2.58 A"/>
    <property type="chains" value="A/B/C=1-549"/>
</dbReference>
<dbReference type="PDB" id="8J0T">
    <property type="method" value="EM"/>
    <property type="resolution" value="2.80 A"/>
    <property type="chains" value="A/B/C=1-549"/>
</dbReference>
<dbReference type="PDB" id="8JR0">
    <property type="method" value="EM"/>
    <property type="resolution" value="2.80 A"/>
    <property type="chains" value="A/B/C=1-549"/>
</dbReference>
<dbReference type="PDBsum" id="8J0S"/>
<dbReference type="PDBsum" id="8J0T"/>
<dbReference type="PDBsum" id="8JR0"/>
<dbReference type="EMDB" id="EMD-35909"/>
<dbReference type="EMDB" id="EMD-35911"/>
<dbReference type="EMDB" id="EMD-36589"/>
<dbReference type="SMR" id="P9WPU7"/>
<dbReference type="FunCoup" id="P9WPU7">
    <property type="interactions" value="404"/>
</dbReference>
<dbReference type="STRING" id="83332.Rv1308"/>
<dbReference type="BindingDB" id="P9WPU7"/>
<dbReference type="ChEMBL" id="CHEMBL2364166"/>
<dbReference type="DrugCentral" id="P9WPU7"/>
<dbReference type="PaxDb" id="83332-Rv1308"/>
<dbReference type="DNASU" id="886936"/>
<dbReference type="GeneID" id="886936"/>
<dbReference type="KEGG" id="mtu:Rv1308"/>
<dbReference type="KEGG" id="mtv:RVBD_1308"/>
<dbReference type="TubercuList" id="Rv1308"/>
<dbReference type="eggNOG" id="COG0056">
    <property type="taxonomic scope" value="Bacteria"/>
</dbReference>
<dbReference type="InParanoid" id="P9WPU7"/>
<dbReference type="OrthoDB" id="9803053at2"/>
<dbReference type="PhylomeDB" id="P9WPU7"/>
<dbReference type="PRO" id="PR:P9WPU7"/>
<dbReference type="Proteomes" id="UP000001584">
    <property type="component" value="Chromosome"/>
</dbReference>
<dbReference type="GO" id="GO:0009274">
    <property type="term" value="C:peptidoglycan-based cell wall"/>
    <property type="evidence" value="ECO:0007005"/>
    <property type="project" value="MTBBASE"/>
</dbReference>
<dbReference type="GO" id="GO:0005886">
    <property type="term" value="C:plasma membrane"/>
    <property type="evidence" value="ECO:0007005"/>
    <property type="project" value="MTBBASE"/>
</dbReference>
<dbReference type="GO" id="GO:0045259">
    <property type="term" value="C:proton-transporting ATP synthase complex"/>
    <property type="evidence" value="ECO:0007669"/>
    <property type="project" value="UniProtKB-KW"/>
</dbReference>
<dbReference type="GO" id="GO:0043531">
    <property type="term" value="F:ADP binding"/>
    <property type="evidence" value="ECO:0000318"/>
    <property type="project" value="GO_Central"/>
</dbReference>
<dbReference type="GO" id="GO:0005524">
    <property type="term" value="F:ATP binding"/>
    <property type="evidence" value="ECO:0000318"/>
    <property type="project" value="GO_Central"/>
</dbReference>
<dbReference type="GO" id="GO:0046933">
    <property type="term" value="F:proton-transporting ATP synthase activity, rotational mechanism"/>
    <property type="evidence" value="ECO:0007669"/>
    <property type="project" value="UniProtKB-UniRule"/>
</dbReference>
<dbReference type="GO" id="GO:0015986">
    <property type="term" value="P:proton motive force-driven ATP synthesis"/>
    <property type="evidence" value="ECO:0000318"/>
    <property type="project" value="GO_Central"/>
</dbReference>
<dbReference type="CDD" id="cd18113">
    <property type="entry name" value="ATP-synt_F1_alpha_C"/>
    <property type="match status" value="1"/>
</dbReference>
<dbReference type="CDD" id="cd18116">
    <property type="entry name" value="ATP-synt_F1_alpha_N"/>
    <property type="match status" value="1"/>
</dbReference>
<dbReference type="CDD" id="cd01132">
    <property type="entry name" value="F1-ATPase_alpha_CD"/>
    <property type="match status" value="1"/>
</dbReference>
<dbReference type="FunFam" id="1.20.150.20:FF:000001">
    <property type="entry name" value="ATP synthase subunit alpha"/>
    <property type="match status" value="1"/>
</dbReference>
<dbReference type="FunFam" id="2.40.30.20:FF:000001">
    <property type="entry name" value="ATP synthase subunit alpha"/>
    <property type="match status" value="1"/>
</dbReference>
<dbReference type="FunFam" id="3.40.50.300:FF:000002">
    <property type="entry name" value="ATP synthase subunit alpha"/>
    <property type="match status" value="1"/>
</dbReference>
<dbReference type="Gene3D" id="2.40.30.20">
    <property type="match status" value="1"/>
</dbReference>
<dbReference type="Gene3D" id="1.20.150.20">
    <property type="entry name" value="ATP synthase alpha/beta chain, C-terminal domain"/>
    <property type="match status" value="1"/>
</dbReference>
<dbReference type="Gene3D" id="3.40.50.300">
    <property type="entry name" value="P-loop containing nucleotide triphosphate hydrolases"/>
    <property type="match status" value="1"/>
</dbReference>
<dbReference type="HAMAP" id="MF_01346">
    <property type="entry name" value="ATP_synth_alpha_bact"/>
    <property type="match status" value="1"/>
</dbReference>
<dbReference type="InterPro" id="IPR023366">
    <property type="entry name" value="ATP_synth_asu-like_sf"/>
</dbReference>
<dbReference type="InterPro" id="IPR000793">
    <property type="entry name" value="ATP_synth_asu_C"/>
</dbReference>
<dbReference type="InterPro" id="IPR038376">
    <property type="entry name" value="ATP_synth_asu_C_sf"/>
</dbReference>
<dbReference type="InterPro" id="IPR033732">
    <property type="entry name" value="ATP_synth_F1_a_nt-bd_dom"/>
</dbReference>
<dbReference type="InterPro" id="IPR005294">
    <property type="entry name" value="ATP_synth_F1_asu"/>
</dbReference>
<dbReference type="InterPro" id="IPR020003">
    <property type="entry name" value="ATPase_a/bsu_AS"/>
</dbReference>
<dbReference type="InterPro" id="IPR004100">
    <property type="entry name" value="ATPase_F1/V1/A1_a/bsu_N"/>
</dbReference>
<dbReference type="InterPro" id="IPR036121">
    <property type="entry name" value="ATPase_F1/V1/A1_a/bsu_N_sf"/>
</dbReference>
<dbReference type="InterPro" id="IPR000194">
    <property type="entry name" value="ATPase_F1/V1/A1_a/bsu_nucl-bd"/>
</dbReference>
<dbReference type="InterPro" id="IPR027417">
    <property type="entry name" value="P-loop_NTPase"/>
</dbReference>
<dbReference type="NCBIfam" id="TIGR00962">
    <property type="entry name" value="atpA"/>
    <property type="match status" value="1"/>
</dbReference>
<dbReference type="NCBIfam" id="NF009884">
    <property type="entry name" value="PRK13343.1"/>
    <property type="match status" value="1"/>
</dbReference>
<dbReference type="PANTHER" id="PTHR48082">
    <property type="entry name" value="ATP SYNTHASE SUBUNIT ALPHA, MITOCHONDRIAL"/>
    <property type="match status" value="1"/>
</dbReference>
<dbReference type="PANTHER" id="PTHR48082:SF2">
    <property type="entry name" value="ATP SYNTHASE SUBUNIT ALPHA, MITOCHONDRIAL"/>
    <property type="match status" value="1"/>
</dbReference>
<dbReference type="Pfam" id="PF00006">
    <property type="entry name" value="ATP-synt_ab"/>
    <property type="match status" value="1"/>
</dbReference>
<dbReference type="Pfam" id="PF00306">
    <property type="entry name" value="ATP-synt_ab_C"/>
    <property type="match status" value="1"/>
</dbReference>
<dbReference type="Pfam" id="PF02874">
    <property type="entry name" value="ATP-synt_ab_N"/>
    <property type="match status" value="1"/>
</dbReference>
<dbReference type="PIRSF" id="PIRSF039088">
    <property type="entry name" value="F_ATPase_subunit_alpha"/>
    <property type="match status" value="1"/>
</dbReference>
<dbReference type="SUPFAM" id="SSF47917">
    <property type="entry name" value="C-terminal domain of alpha and beta subunits of F1 ATP synthase"/>
    <property type="match status" value="1"/>
</dbReference>
<dbReference type="SUPFAM" id="SSF50615">
    <property type="entry name" value="N-terminal domain of alpha and beta subunits of F1 ATP synthase"/>
    <property type="match status" value="1"/>
</dbReference>
<dbReference type="SUPFAM" id="SSF52540">
    <property type="entry name" value="P-loop containing nucleoside triphosphate hydrolases"/>
    <property type="match status" value="1"/>
</dbReference>
<dbReference type="PROSITE" id="PS00152">
    <property type="entry name" value="ATPASE_ALPHA_BETA"/>
    <property type="match status" value="1"/>
</dbReference>
<keyword id="KW-0002">3D-structure</keyword>
<keyword id="KW-0066">ATP synthesis</keyword>
<keyword id="KW-0067">ATP-binding</keyword>
<keyword id="KW-1003">Cell membrane</keyword>
<keyword id="KW-0139">CF(1)</keyword>
<keyword id="KW-0375">Hydrogen ion transport</keyword>
<keyword id="KW-0406">Ion transport</keyword>
<keyword id="KW-1017">Isopeptide bond</keyword>
<keyword id="KW-0472">Membrane</keyword>
<keyword id="KW-0547">Nucleotide-binding</keyword>
<keyword id="KW-1185">Reference proteome</keyword>
<keyword id="KW-1278">Translocase</keyword>
<keyword id="KW-0813">Transport</keyword>
<keyword id="KW-0832">Ubl conjugation</keyword>
<evidence type="ECO:0000255" key="1">
    <source>
        <dbReference type="HAMAP-Rule" id="MF_01346"/>
    </source>
</evidence>
<evidence type="ECO:0000269" key="2">
    <source>
    </source>
</evidence>
<evidence type="ECO:0007829" key="3">
    <source>
        <dbReference type="PDB" id="8J0S"/>
    </source>
</evidence>
<evidence type="ECO:0007829" key="4">
    <source>
        <dbReference type="PDB" id="8J0T"/>
    </source>
</evidence>
<gene>
    <name evidence="1" type="primary">atpA</name>
    <name type="ordered locus">Rv1308</name>
    <name type="ORF">MTCY373.28</name>
</gene>
<protein>
    <recommendedName>
        <fullName evidence="1">ATP synthase subunit alpha</fullName>
        <ecNumber evidence="1">7.1.2.2</ecNumber>
    </recommendedName>
    <alternativeName>
        <fullName evidence="1">ATP synthase F1 sector subunit alpha</fullName>
    </alternativeName>
    <alternativeName>
        <fullName evidence="1">F-ATPase subunit alpha</fullName>
    </alternativeName>
</protein>
<name>ATPA_MYCTU</name>
<comment type="function">
    <text evidence="1">Produces ATP from ADP in the presence of a proton gradient across the membrane. The alpha chain is a regulatory subunit.</text>
</comment>
<comment type="catalytic activity">
    <reaction evidence="1">
        <text>ATP + H2O + 4 H(+)(in) = ADP + phosphate + 5 H(+)(out)</text>
        <dbReference type="Rhea" id="RHEA:57720"/>
        <dbReference type="ChEBI" id="CHEBI:15377"/>
        <dbReference type="ChEBI" id="CHEBI:15378"/>
        <dbReference type="ChEBI" id="CHEBI:30616"/>
        <dbReference type="ChEBI" id="CHEBI:43474"/>
        <dbReference type="ChEBI" id="CHEBI:456216"/>
        <dbReference type="EC" id="7.1.2.2"/>
    </reaction>
</comment>
<comment type="subunit">
    <text evidence="1">F-type ATPases have 2 components, CF(1) - the catalytic core - and CF(0) - the membrane proton channel. CF(1) has five subunits: alpha(3), beta(3), gamma(1), delta(1), epsilon(1). CF(0) has three main subunits: a(1), b(2) and c(9-12). The alpha and beta chains form an alternating ring which encloses part of the gamma chain. CF(1) is attached to CF(0) by a central stalk formed by the gamma and epsilon chains, while a peripheral stalk is formed by the delta and b chains.</text>
</comment>
<comment type="subcellular location">
    <subcellularLocation>
        <location evidence="1">Cell membrane</location>
        <topology evidence="1">Peripheral membrane protein</topology>
    </subcellularLocation>
</comment>
<comment type="similarity">
    <text evidence="1">Belongs to the ATPase alpha/beta chains family.</text>
</comment>
<organism>
    <name type="scientific">Mycobacterium tuberculosis (strain ATCC 25618 / H37Rv)</name>
    <dbReference type="NCBI Taxonomy" id="83332"/>
    <lineage>
        <taxon>Bacteria</taxon>
        <taxon>Bacillati</taxon>
        <taxon>Actinomycetota</taxon>
        <taxon>Actinomycetes</taxon>
        <taxon>Mycobacteriales</taxon>
        <taxon>Mycobacteriaceae</taxon>
        <taxon>Mycobacterium</taxon>
        <taxon>Mycobacterium tuberculosis complex</taxon>
    </lineage>
</organism>
<accession>P9WPU7</accession>
<accession>L0T7W3</accession>
<accession>P63673</accession>
<accession>Q10592</accession>
<proteinExistence type="evidence at protein level"/>
<reference key="1">
    <citation type="journal article" date="1998" name="Nature">
        <title>Deciphering the biology of Mycobacterium tuberculosis from the complete genome sequence.</title>
        <authorList>
            <person name="Cole S.T."/>
            <person name="Brosch R."/>
            <person name="Parkhill J."/>
            <person name="Garnier T."/>
            <person name="Churcher C.M."/>
            <person name="Harris D.E."/>
            <person name="Gordon S.V."/>
            <person name="Eiglmeier K."/>
            <person name="Gas S."/>
            <person name="Barry C.E. III"/>
            <person name="Tekaia F."/>
            <person name="Badcock K."/>
            <person name="Basham D."/>
            <person name="Brown D."/>
            <person name="Chillingworth T."/>
            <person name="Connor R."/>
            <person name="Davies R.M."/>
            <person name="Devlin K."/>
            <person name="Feltwell T."/>
            <person name="Gentles S."/>
            <person name="Hamlin N."/>
            <person name="Holroyd S."/>
            <person name="Hornsby T."/>
            <person name="Jagels K."/>
            <person name="Krogh A."/>
            <person name="McLean J."/>
            <person name="Moule S."/>
            <person name="Murphy L.D."/>
            <person name="Oliver S."/>
            <person name="Osborne J."/>
            <person name="Quail M.A."/>
            <person name="Rajandream M.A."/>
            <person name="Rogers J."/>
            <person name="Rutter S."/>
            <person name="Seeger K."/>
            <person name="Skelton S."/>
            <person name="Squares S."/>
            <person name="Squares R."/>
            <person name="Sulston J.E."/>
            <person name="Taylor K."/>
            <person name="Whitehead S."/>
            <person name="Barrell B.G."/>
        </authorList>
    </citation>
    <scope>NUCLEOTIDE SEQUENCE [LARGE SCALE GENOMIC DNA]</scope>
    <source>
        <strain>ATCC 25618 / H37Rv</strain>
    </source>
</reference>
<reference key="2">
    <citation type="journal article" date="2010" name="PLoS ONE">
        <title>Prokaryotic ubiquitin-like protein (Pup) proteome of Mycobacterium tuberculosis.</title>
        <authorList>
            <person name="Festa R.A."/>
            <person name="McAllister F."/>
            <person name="Pearce M.J."/>
            <person name="Mintseris J."/>
            <person name="Burns K.E."/>
            <person name="Gygi S.P."/>
            <person name="Darwin K.H."/>
        </authorList>
    </citation>
    <scope>PUPYLATION AT LYS-499</scope>
    <scope>IDENTIFICATION BY MASS SPECTROMETRY</scope>
    <source>
        <strain>ATCC 25618 / H37Rv</strain>
    </source>
</reference>
<reference key="3">
    <citation type="journal article" date="2011" name="Mol. Cell. Proteomics">
        <title>Proteogenomic analysis of Mycobacterium tuberculosis by high resolution mass spectrometry.</title>
        <authorList>
            <person name="Kelkar D.S."/>
            <person name="Kumar D."/>
            <person name="Kumar P."/>
            <person name="Balakrishnan L."/>
            <person name="Muthusamy B."/>
            <person name="Yadav A.K."/>
            <person name="Shrivastava P."/>
            <person name="Marimuthu A."/>
            <person name="Anand S."/>
            <person name="Sundaram H."/>
            <person name="Kingsbury R."/>
            <person name="Harsha H.C."/>
            <person name="Nair B."/>
            <person name="Prasad T.S."/>
            <person name="Chauhan D.S."/>
            <person name="Katoch K."/>
            <person name="Katoch V.M."/>
            <person name="Kumar P."/>
            <person name="Chaerkady R."/>
            <person name="Ramachandran S."/>
            <person name="Dash D."/>
            <person name="Pandey A."/>
        </authorList>
    </citation>
    <scope>IDENTIFICATION BY MASS SPECTROMETRY [LARGE SCALE ANALYSIS]</scope>
    <source>
        <strain>ATCC 25618 / H37Rv</strain>
    </source>
</reference>
<sequence>MAELTIPADDIQSAIEEYVSSFTADTSREEVGTVVDAGDGIAHVEGLPSVMTQELLEFPGGILGVALNLDEHSVGAVILGDFENIEEGQQVKRTGEVLSVPVGDGFLGRVVNPLGQPIDGRGDVDSDTRRALELQAPSVVHRQGVKEPLQTGIKAIDAMTPIGRGQRQLIIGDRKTGKTAVCVDTILNQRQNWESGDPKKQVRCVYVAIGQKGTTIAAVRRTLEEGGAMDYTTIVAAAASESAGFKWLAPYTGSAIAQHWMYEGKHVLIIFDDLTKQAEAYRAISLLLRRPPGREAYPGDVFYLHSRLLERCAKLSDDLGGGSLTGLPIIETKANDISAYIPTNVISITDGQCFLETDLFNQGVRPAINVGVSVSRVGGAAQIKAMKEVAGSLRLDLSQYRELEAFAAFASDLDAASKAQLERGARLVELLKQPQSQPMPVEEQVVSIFLGTGGHLDSVPVEDVRRFETELLDHMRASEEEILTEIRDSQKLTEEAADKLTEVIKNFKKGFAATGGGSVVPDEHVEALDEDKLAKEAVKVKKPAPKKKK</sequence>